<reference key="1">
    <citation type="journal article" date="2006" name="PLoS Genet.">
        <title>Comparative genomics of emerging human ehrlichiosis agents.</title>
        <authorList>
            <person name="Dunning Hotopp J.C."/>
            <person name="Lin M."/>
            <person name="Madupu R."/>
            <person name="Crabtree J."/>
            <person name="Angiuoli S.V."/>
            <person name="Eisen J.A."/>
            <person name="Seshadri R."/>
            <person name="Ren Q."/>
            <person name="Wu M."/>
            <person name="Utterback T.R."/>
            <person name="Smith S."/>
            <person name="Lewis M."/>
            <person name="Khouri H."/>
            <person name="Zhang C."/>
            <person name="Niu H."/>
            <person name="Lin Q."/>
            <person name="Ohashi N."/>
            <person name="Zhi N."/>
            <person name="Nelson W.C."/>
            <person name="Brinkac L.M."/>
            <person name="Dodson R.J."/>
            <person name="Rosovitz M.J."/>
            <person name="Sundaram J.P."/>
            <person name="Daugherty S.C."/>
            <person name="Davidsen T."/>
            <person name="Durkin A.S."/>
            <person name="Gwinn M.L."/>
            <person name="Haft D.H."/>
            <person name="Selengut J.D."/>
            <person name="Sullivan S.A."/>
            <person name="Zafar N."/>
            <person name="Zhou L."/>
            <person name="Benahmed F."/>
            <person name="Forberger H."/>
            <person name="Halpin R."/>
            <person name="Mulligan S."/>
            <person name="Robinson J."/>
            <person name="White O."/>
            <person name="Rikihisa Y."/>
            <person name="Tettelin H."/>
        </authorList>
    </citation>
    <scope>NUCLEOTIDE SEQUENCE [LARGE SCALE GENOMIC DNA]</scope>
    <source>
        <strain>ATCC CRL-10679 / Arkansas</strain>
    </source>
</reference>
<proteinExistence type="inferred from homology"/>
<organism>
    <name type="scientific">Ehrlichia chaffeensis (strain ATCC CRL-10679 / Arkansas)</name>
    <dbReference type="NCBI Taxonomy" id="205920"/>
    <lineage>
        <taxon>Bacteria</taxon>
        <taxon>Pseudomonadati</taxon>
        <taxon>Pseudomonadota</taxon>
        <taxon>Alphaproteobacteria</taxon>
        <taxon>Rickettsiales</taxon>
        <taxon>Anaplasmataceae</taxon>
        <taxon>Ehrlichia</taxon>
    </lineage>
</organism>
<protein>
    <recommendedName>
        <fullName evidence="1">Elongation factor G</fullName>
        <shortName evidence="1">EF-G</shortName>
    </recommendedName>
</protein>
<accession>Q2GFN5</accession>
<gene>
    <name evidence="1" type="primary">fusA</name>
    <name type="ordered locus">ECH_0961</name>
</gene>
<dbReference type="EMBL" id="CP000236">
    <property type="protein sequence ID" value="ABD45028.1"/>
    <property type="molecule type" value="Genomic_DNA"/>
</dbReference>
<dbReference type="RefSeq" id="WP_011452920.1">
    <property type="nucleotide sequence ID" value="NC_007799.1"/>
</dbReference>
<dbReference type="SMR" id="Q2GFN5"/>
<dbReference type="STRING" id="205920.ECH_0961"/>
<dbReference type="KEGG" id="ech:ECH_0961"/>
<dbReference type="eggNOG" id="COG0480">
    <property type="taxonomic scope" value="Bacteria"/>
</dbReference>
<dbReference type="HOGENOM" id="CLU_002794_4_1_5"/>
<dbReference type="OrthoDB" id="9802948at2"/>
<dbReference type="Proteomes" id="UP000008320">
    <property type="component" value="Chromosome"/>
</dbReference>
<dbReference type="GO" id="GO:0005737">
    <property type="term" value="C:cytoplasm"/>
    <property type="evidence" value="ECO:0007669"/>
    <property type="project" value="UniProtKB-SubCell"/>
</dbReference>
<dbReference type="GO" id="GO:0005525">
    <property type="term" value="F:GTP binding"/>
    <property type="evidence" value="ECO:0007669"/>
    <property type="project" value="UniProtKB-UniRule"/>
</dbReference>
<dbReference type="GO" id="GO:0003924">
    <property type="term" value="F:GTPase activity"/>
    <property type="evidence" value="ECO:0007669"/>
    <property type="project" value="InterPro"/>
</dbReference>
<dbReference type="GO" id="GO:0003746">
    <property type="term" value="F:translation elongation factor activity"/>
    <property type="evidence" value="ECO:0007669"/>
    <property type="project" value="UniProtKB-UniRule"/>
</dbReference>
<dbReference type="GO" id="GO:0032790">
    <property type="term" value="P:ribosome disassembly"/>
    <property type="evidence" value="ECO:0007669"/>
    <property type="project" value="TreeGrafter"/>
</dbReference>
<dbReference type="CDD" id="cd01886">
    <property type="entry name" value="EF-G"/>
    <property type="match status" value="1"/>
</dbReference>
<dbReference type="CDD" id="cd16262">
    <property type="entry name" value="EFG_III"/>
    <property type="match status" value="1"/>
</dbReference>
<dbReference type="CDD" id="cd01434">
    <property type="entry name" value="EFG_mtEFG1_IV"/>
    <property type="match status" value="1"/>
</dbReference>
<dbReference type="CDD" id="cd03713">
    <property type="entry name" value="EFG_mtEFG_C"/>
    <property type="match status" value="1"/>
</dbReference>
<dbReference type="CDD" id="cd04088">
    <property type="entry name" value="EFG_mtEFG_II"/>
    <property type="match status" value="1"/>
</dbReference>
<dbReference type="FunFam" id="2.40.30.10:FF:000006">
    <property type="entry name" value="Elongation factor G"/>
    <property type="match status" value="1"/>
</dbReference>
<dbReference type="FunFam" id="3.30.230.10:FF:000003">
    <property type="entry name" value="Elongation factor G"/>
    <property type="match status" value="1"/>
</dbReference>
<dbReference type="FunFam" id="3.30.70.240:FF:000001">
    <property type="entry name" value="Elongation factor G"/>
    <property type="match status" value="1"/>
</dbReference>
<dbReference type="FunFam" id="3.30.70.870:FF:000001">
    <property type="entry name" value="Elongation factor G"/>
    <property type="match status" value="1"/>
</dbReference>
<dbReference type="FunFam" id="3.40.50.300:FF:000029">
    <property type="entry name" value="Elongation factor G"/>
    <property type="match status" value="1"/>
</dbReference>
<dbReference type="Gene3D" id="3.30.230.10">
    <property type="match status" value="1"/>
</dbReference>
<dbReference type="Gene3D" id="3.30.70.240">
    <property type="match status" value="1"/>
</dbReference>
<dbReference type="Gene3D" id="3.30.70.870">
    <property type="entry name" value="Elongation Factor G (Translational Gtpase), domain 3"/>
    <property type="match status" value="1"/>
</dbReference>
<dbReference type="Gene3D" id="3.40.50.300">
    <property type="entry name" value="P-loop containing nucleotide triphosphate hydrolases"/>
    <property type="match status" value="1"/>
</dbReference>
<dbReference type="Gene3D" id="2.40.30.10">
    <property type="entry name" value="Translation factors"/>
    <property type="match status" value="1"/>
</dbReference>
<dbReference type="HAMAP" id="MF_00054_B">
    <property type="entry name" value="EF_G_EF_2_B"/>
    <property type="match status" value="1"/>
</dbReference>
<dbReference type="InterPro" id="IPR053905">
    <property type="entry name" value="EF-G-like_DII"/>
</dbReference>
<dbReference type="InterPro" id="IPR041095">
    <property type="entry name" value="EFG_II"/>
</dbReference>
<dbReference type="InterPro" id="IPR009022">
    <property type="entry name" value="EFG_III"/>
</dbReference>
<dbReference type="InterPro" id="IPR035647">
    <property type="entry name" value="EFG_III/V"/>
</dbReference>
<dbReference type="InterPro" id="IPR047872">
    <property type="entry name" value="EFG_IV"/>
</dbReference>
<dbReference type="InterPro" id="IPR035649">
    <property type="entry name" value="EFG_V"/>
</dbReference>
<dbReference type="InterPro" id="IPR000640">
    <property type="entry name" value="EFG_V-like"/>
</dbReference>
<dbReference type="InterPro" id="IPR031157">
    <property type="entry name" value="G_TR_CS"/>
</dbReference>
<dbReference type="InterPro" id="IPR027417">
    <property type="entry name" value="P-loop_NTPase"/>
</dbReference>
<dbReference type="InterPro" id="IPR020568">
    <property type="entry name" value="Ribosomal_Su5_D2-typ_SF"/>
</dbReference>
<dbReference type="InterPro" id="IPR014721">
    <property type="entry name" value="Ribsml_uS5_D2-typ_fold_subgr"/>
</dbReference>
<dbReference type="InterPro" id="IPR005225">
    <property type="entry name" value="Small_GTP-bd"/>
</dbReference>
<dbReference type="InterPro" id="IPR000795">
    <property type="entry name" value="T_Tr_GTP-bd_dom"/>
</dbReference>
<dbReference type="InterPro" id="IPR009000">
    <property type="entry name" value="Transl_B-barrel_sf"/>
</dbReference>
<dbReference type="InterPro" id="IPR004540">
    <property type="entry name" value="Transl_elong_EFG/EF2"/>
</dbReference>
<dbReference type="InterPro" id="IPR005517">
    <property type="entry name" value="Transl_elong_EFG/EF2_IV"/>
</dbReference>
<dbReference type="NCBIfam" id="TIGR00484">
    <property type="entry name" value="EF-G"/>
    <property type="match status" value="1"/>
</dbReference>
<dbReference type="NCBIfam" id="NF009381">
    <property type="entry name" value="PRK12740.1-5"/>
    <property type="match status" value="1"/>
</dbReference>
<dbReference type="NCBIfam" id="TIGR00231">
    <property type="entry name" value="small_GTP"/>
    <property type="match status" value="1"/>
</dbReference>
<dbReference type="PANTHER" id="PTHR43261:SF1">
    <property type="entry name" value="RIBOSOME-RELEASING FACTOR 2, MITOCHONDRIAL"/>
    <property type="match status" value="1"/>
</dbReference>
<dbReference type="PANTHER" id="PTHR43261">
    <property type="entry name" value="TRANSLATION ELONGATION FACTOR G-RELATED"/>
    <property type="match status" value="1"/>
</dbReference>
<dbReference type="Pfam" id="PF22042">
    <property type="entry name" value="EF-G_D2"/>
    <property type="match status" value="1"/>
</dbReference>
<dbReference type="Pfam" id="PF00679">
    <property type="entry name" value="EFG_C"/>
    <property type="match status" value="1"/>
</dbReference>
<dbReference type="Pfam" id="PF14492">
    <property type="entry name" value="EFG_III"/>
    <property type="match status" value="1"/>
</dbReference>
<dbReference type="Pfam" id="PF03764">
    <property type="entry name" value="EFG_IV"/>
    <property type="match status" value="1"/>
</dbReference>
<dbReference type="Pfam" id="PF00009">
    <property type="entry name" value="GTP_EFTU"/>
    <property type="match status" value="1"/>
</dbReference>
<dbReference type="PRINTS" id="PR00315">
    <property type="entry name" value="ELONGATNFCT"/>
</dbReference>
<dbReference type="SMART" id="SM00838">
    <property type="entry name" value="EFG_C"/>
    <property type="match status" value="1"/>
</dbReference>
<dbReference type="SMART" id="SM00889">
    <property type="entry name" value="EFG_IV"/>
    <property type="match status" value="1"/>
</dbReference>
<dbReference type="SUPFAM" id="SSF54980">
    <property type="entry name" value="EF-G C-terminal domain-like"/>
    <property type="match status" value="2"/>
</dbReference>
<dbReference type="SUPFAM" id="SSF52540">
    <property type="entry name" value="P-loop containing nucleoside triphosphate hydrolases"/>
    <property type="match status" value="1"/>
</dbReference>
<dbReference type="SUPFAM" id="SSF54211">
    <property type="entry name" value="Ribosomal protein S5 domain 2-like"/>
    <property type="match status" value="1"/>
</dbReference>
<dbReference type="SUPFAM" id="SSF50447">
    <property type="entry name" value="Translation proteins"/>
    <property type="match status" value="1"/>
</dbReference>
<dbReference type="PROSITE" id="PS00301">
    <property type="entry name" value="G_TR_1"/>
    <property type="match status" value="1"/>
</dbReference>
<dbReference type="PROSITE" id="PS51722">
    <property type="entry name" value="G_TR_2"/>
    <property type="match status" value="1"/>
</dbReference>
<evidence type="ECO:0000255" key="1">
    <source>
        <dbReference type="HAMAP-Rule" id="MF_00054"/>
    </source>
</evidence>
<sequence length="690" mass="76243">MSIDNELSKCRNIGIMAHIDAGKTTTTERILFYTGKQNRIGEVHEGAASMDWMEQEKERGITITSAATTCFWNGHRINIIDTPGHVDFTIEVERSLRVLDGAVAVFDGVAGVEPQSETVWRQADKYNVPRICFMNKMDRMGADFYRCVDMVVERLGATPLVLQLPIGIEKDFVGVVDLLEMRSIIWDEDSLGASFHYGEIPKDMLDKAQEYRNKLLESAVELNDEAMNLYFEGKEISVSLLKSCIRAGVIQSKFVPVLCGSAFKNRGVQPLLDAVVDFLPAPNDIPMMEALDVKTSNTINIKSSIDGKFVALAFKVMTDKFVGSLTFIRIYSGRLSSKTTVLNAVKNSTESIGRILLMHANNREDITEAKAGDIVALAGLKKTVTGDTLCTLDQPIILERMEFPEPVMEIAVEPKSTADQEKMGIALSRLVAEDPSLGMCVNPESGQTILKGMGELHLEVIVDRMRREFNVEANIGAPQVAYRETITKSVEIEYIHKKQTGGAGQFAKVNILFEPLPPGSGFQFESKITGGAIPKEYIPGVQNGLENIRGSGMLAGFPVIDFKATLVDGAFHEVDSSPLAFELAAKGAFRDMVNKAGAILLEPIMKVEIITPDEYMGDVIGDINSRRGRVAEMQDRHNTKVILAFIPLAKMFGYVKDLRSMSQGRAQYSMYFSCYEQVPDNIVANEIKTK</sequence>
<name>EFG_EHRCR</name>
<comment type="function">
    <text evidence="1">Catalyzes the GTP-dependent ribosomal translocation step during translation elongation. During this step, the ribosome changes from the pre-translocational (PRE) to the post-translocational (POST) state as the newly formed A-site-bound peptidyl-tRNA and P-site-bound deacylated tRNA move to the P and E sites, respectively. Catalyzes the coordinated movement of the two tRNA molecules, the mRNA and conformational changes in the ribosome.</text>
</comment>
<comment type="subcellular location">
    <subcellularLocation>
        <location evidence="1">Cytoplasm</location>
    </subcellularLocation>
</comment>
<comment type="similarity">
    <text evidence="1">Belongs to the TRAFAC class translation factor GTPase superfamily. Classic translation factor GTPase family. EF-G/EF-2 subfamily.</text>
</comment>
<feature type="chain" id="PRO_0000263447" description="Elongation factor G">
    <location>
        <begin position="1"/>
        <end position="690"/>
    </location>
</feature>
<feature type="domain" description="tr-type G">
    <location>
        <begin position="8"/>
        <end position="283"/>
    </location>
</feature>
<feature type="binding site" evidence="1">
    <location>
        <begin position="17"/>
        <end position="24"/>
    </location>
    <ligand>
        <name>GTP</name>
        <dbReference type="ChEBI" id="CHEBI:37565"/>
    </ligand>
</feature>
<feature type="binding site" evidence="1">
    <location>
        <begin position="81"/>
        <end position="85"/>
    </location>
    <ligand>
        <name>GTP</name>
        <dbReference type="ChEBI" id="CHEBI:37565"/>
    </ligand>
</feature>
<feature type="binding site" evidence="1">
    <location>
        <begin position="135"/>
        <end position="138"/>
    </location>
    <ligand>
        <name>GTP</name>
        <dbReference type="ChEBI" id="CHEBI:37565"/>
    </ligand>
</feature>
<keyword id="KW-0963">Cytoplasm</keyword>
<keyword id="KW-0251">Elongation factor</keyword>
<keyword id="KW-0342">GTP-binding</keyword>
<keyword id="KW-0547">Nucleotide-binding</keyword>
<keyword id="KW-0648">Protein biosynthesis</keyword>
<keyword id="KW-1185">Reference proteome</keyword>